<protein>
    <recommendedName>
        <fullName evidence="1">Glucose-6-phosphate isomerase</fullName>
        <shortName evidence="1">GPI</shortName>
        <ecNumber evidence="1">5.3.1.9</ecNumber>
    </recommendedName>
    <alternativeName>
        <fullName evidence="1">Phosphoglucose isomerase</fullName>
        <shortName evidence="1">PGI</shortName>
    </alternativeName>
    <alternativeName>
        <fullName evidence="1">Phosphohexose isomerase</fullName>
        <shortName evidence="1">PHI</shortName>
    </alternativeName>
</protein>
<accession>Q8FR39</accession>
<organism>
    <name type="scientific">Corynebacterium efficiens (strain DSM 44549 / YS-314 / AJ 12310 / JCM 11189 / NBRC 100395)</name>
    <dbReference type="NCBI Taxonomy" id="196164"/>
    <lineage>
        <taxon>Bacteria</taxon>
        <taxon>Bacillati</taxon>
        <taxon>Actinomycetota</taxon>
        <taxon>Actinomycetes</taxon>
        <taxon>Mycobacteriales</taxon>
        <taxon>Corynebacteriaceae</taxon>
        <taxon>Corynebacterium</taxon>
    </lineage>
</organism>
<feature type="chain" id="PRO_0000180632" description="Glucose-6-phosphate isomerase">
    <location>
        <begin position="1"/>
        <end position="542"/>
    </location>
</feature>
<feature type="active site" description="Proton donor" evidence="1">
    <location>
        <position position="353"/>
    </location>
</feature>
<feature type="active site" evidence="1">
    <location>
        <position position="384"/>
    </location>
</feature>
<feature type="active site" evidence="1">
    <location>
        <position position="508"/>
    </location>
</feature>
<proteinExistence type="inferred from homology"/>
<keyword id="KW-0963">Cytoplasm</keyword>
<keyword id="KW-0312">Gluconeogenesis</keyword>
<keyword id="KW-0324">Glycolysis</keyword>
<keyword id="KW-0413">Isomerase</keyword>
<keyword id="KW-1185">Reference proteome</keyword>
<evidence type="ECO:0000255" key="1">
    <source>
        <dbReference type="HAMAP-Rule" id="MF_00473"/>
    </source>
</evidence>
<sequence length="542" mass="59230">MANDITTTAAWQSLTERYEAFQGTTLRELFQDGGRAEKLSFDAAGLRVDLSKNLLDDAILTDLVALAEQAGLTDRIEAMFRGEHINNTEDRAVLHTALRLPVEESLEVDGQDVAADVHEVLGRMRDFATALRSGAWLGYTGRTIKKVVNIGIGGSDLGPAMATKALRAYATAGITAEFVSNVDPADMVSVLEDLDAESTLFVIASKTFTTQETLANANAAKNWLIEQLGSEEAVSKHFVAVSTNAEKVTAFGINPENMFGFWDWVGGRYSVDSAVGLSLMAVIGPRDFMRFLGGFRAMDEHFRYTDFGQNVPVLMALLSVWYTDFFGAETHAVLPYSEDLSRFAAYLQQLTMESNGKSVRRDGSPVTTGTGEIYWGEPGTNGQHAFFQLIHQGTRLIPADFIGFARPKQDLPAGEKSMHDLLMSNFFAQTKVLAFGKTAEEIAAEGVDDNLINHKVMPGNRPTTTILAEELTPAVLGALIALYEHIVFVQGVIWDINSFDQWGVELGKQQASDLAPAVSGEVEVDSGDSSTDALIRWYRTNR</sequence>
<comment type="function">
    <text evidence="1">Catalyzes the reversible isomerization of glucose-6-phosphate to fructose-6-phosphate.</text>
</comment>
<comment type="catalytic activity">
    <reaction evidence="1">
        <text>alpha-D-glucose 6-phosphate = beta-D-fructose 6-phosphate</text>
        <dbReference type="Rhea" id="RHEA:11816"/>
        <dbReference type="ChEBI" id="CHEBI:57634"/>
        <dbReference type="ChEBI" id="CHEBI:58225"/>
        <dbReference type="EC" id="5.3.1.9"/>
    </reaction>
</comment>
<comment type="pathway">
    <text evidence="1">Carbohydrate biosynthesis; gluconeogenesis.</text>
</comment>
<comment type="pathway">
    <text evidence="1">Carbohydrate degradation; glycolysis; D-glyceraldehyde 3-phosphate and glycerone phosphate from D-glucose: step 2/4.</text>
</comment>
<comment type="subcellular location">
    <subcellularLocation>
        <location evidence="1">Cytoplasm</location>
    </subcellularLocation>
</comment>
<comment type="similarity">
    <text evidence="1">Belongs to the GPI family.</text>
</comment>
<name>G6PI_COREF</name>
<dbReference type="EC" id="5.3.1.9" evidence="1"/>
<dbReference type="EMBL" id="BA000035">
    <property type="protein sequence ID" value="BAC17737.1"/>
    <property type="molecule type" value="Genomic_DNA"/>
</dbReference>
<dbReference type="RefSeq" id="WP_006770110.1">
    <property type="nucleotide sequence ID" value="NC_004369.1"/>
</dbReference>
<dbReference type="SMR" id="Q8FR39"/>
<dbReference type="STRING" id="196164.gene:10741333"/>
<dbReference type="KEGG" id="cef:CE0927"/>
<dbReference type="eggNOG" id="COG0166">
    <property type="taxonomic scope" value="Bacteria"/>
</dbReference>
<dbReference type="HOGENOM" id="CLU_017947_3_1_11"/>
<dbReference type="OrthoDB" id="140919at2"/>
<dbReference type="UniPathway" id="UPA00109">
    <property type="reaction ID" value="UER00181"/>
</dbReference>
<dbReference type="UniPathway" id="UPA00138"/>
<dbReference type="Proteomes" id="UP000001409">
    <property type="component" value="Chromosome"/>
</dbReference>
<dbReference type="GO" id="GO:0005829">
    <property type="term" value="C:cytosol"/>
    <property type="evidence" value="ECO:0007669"/>
    <property type="project" value="TreeGrafter"/>
</dbReference>
<dbReference type="GO" id="GO:0097367">
    <property type="term" value="F:carbohydrate derivative binding"/>
    <property type="evidence" value="ECO:0007669"/>
    <property type="project" value="InterPro"/>
</dbReference>
<dbReference type="GO" id="GO:0004347">
    <property type="term" value="F:glucose-6-phosphate isomerase activity"/>
    <property type="evidence" value="ECO:0007669"/>
    <property type="project" value="UniProtKB-UniRule"/>
</dbReference>
<dbReference type="GO" id="GO:0048029">
    <property type="term" value="F:monosaccharide binding"/>
    <property type="evidence" value="ECO:0007669"/>
    <property type="project" value="TreeGrafter"/>
</dbReference>
<dbReference type="GO" id="GO:0006094">
    <property type="term" value="P:gluconeogenesis"/>
    <property type="evidence" value="ECO:0007669"/>
    <property type="project" value="UniProtKB-UniRule"/>
</dbReference>
<dbReference type="GO" id="GO:0051156">
    <property type="term" value="P:glucose 6-phosphate metabolic process"/>
    <property type="evidence" value="ECO:0007669"/>
    <property type="project" value="TreeGrafter"/>
</dbReference>
<dbReference type="GO" id="GO:0006096">
    <property type="term" value="P:glycolytic process"/>
    <property type="evidence" value="ECO:0007669"/>
    <property type="project" value="UniProtKB-UniRule"/>
</dbReference>
<dbReference type="CDD" id="cd05015">
    <property type="entry name" value="SIS_PGI_1"/>
    <property type="match status" value="1"/>
</dbReference>
<dbReference type="CDD" id="cd05016">
    <property type="entry name" value="SIS_PGI_2"/>
    <property type="match status" value="1"/>
</dbReference>
<dbReference type="FunFam" id="3.40.50.10490:FF:000018">
    <property type="entry name" value="Glucose-6-phosphate isomerase"/>
    <property type="match status" value="1"/>
</dbReference>
<dbReference type="Gene3D" id="1.10.1390.10">
    <property type="match status" value="1"/>
</dbReference>
<dbReference type="Gene3D" id="3.40.50.10490">
    <property type="entry name" value="Glucose-6-phosphate isomerase like protein, domain 1"/>
    <property type="match status" value="2"/>
</dbReference>
<dbReference type="HAMAP" id="MF_00473">
    <property type="entry name" value="G6P_isomerase"/>
    <property type="match status" value="1"/>
</dbReference>
<dbReference type="InterPro" id="IPR001672">
    <property type="entry name" value="G6P_Isomerase"/>
</dbReference>
<dbReference type="InterPro" id="IPR023096">
    <property type="entry name" value="G6P_Isomerase_C"/>
</dbReference>
<dbReference type="InterPro" id="IPR018189">
    <property type="entry name" value="Phosphoglucose_isomerase_CS"/>
</dbReference>
<dbReference type="InterPro" id="IPR046348">
    <property type="entry name" value="SIS_dom_sf"/>
</dbReference>
<dbReference type="InterPro" id="IPR035476">
    <property type="entry name" value="SIS_PGI_1"/>
</dbReference>
<dbReference type="InterPro" id="IPR035482">
    <property type="entry name" value="SIS_PGI_2"/>
</dbReference>
<dbReference type="NCBIfam" id="NF001211">
    <property type="entry name" value="PRK00179.1"/>
    <property type="match status" value="1"/>
</dbReference>
<dbReference type="PANTHER" id="PTHR11469">
    <property type="entry name" value="GLUCOSE-6-PHOSPHATE ISOMERASE"/>
    <property type="match status" value="1"/>
</dbReference>
<dbReference type="PANTHER" id="PTHR11469:SF1">
    <property type="entry name" value="GLUCOSE-6-PHOSPHATE ISOMERASE"/>
    <property type="match status" value="1"/>
</dbReference>
<dbReference type="Pfam" id="PF00342">
    <property type="entry name" value="PGI"/>
    <property type="match status" value="1"/>
</dbReference>
<dbReference type="PRINTS" id="PR00662">
    <property type="entry name" value="G6PISOMERASE"/>
</dbReference>
<dbReference type="SUPFAM" id="SSF53697">
    <property type="entry name" value="SIS domain"/>
    <property type="match status" value="1"/>
</dbReference>
<dbReference type="PROSITE" id="PS00765">
    <property type="entry name" value="P_GLUCOSE_ISOMERASE_1"/>
    <property type="match status" value="1"/>
</dbReference>
<dbReference type="PROSITE" id="PS00174">
    <property type="entry name" value="P_GLUCOSE_ISOMERASE_2"/>
    <property type="match status" value="1"/>
</dbReference>
<dbReference type="PROSITE" id="PS51463">
    <property type="entry name" value="P_GLUCOSE_ISOMERASE_3"/>
    <property type="match status" value="1"/>
</dbReference>
<gene>
    <name evidence="1" type="primary">pgi</name>
    <name type="ordered locus">CE0927</name>
</gene>
<reference key="1">
    <citation type="journal article" date="2003" name="Genome Res.">
        <title>Comparative complete genome sequence analysis of the amino acid replacements responsible for the thermostability of Corynebacterium efficiens.</title>
        <authorList>
            <person name="Nishio Y."/>
            <person name="Nakamura Y."/>
            <person name="Kawarabayasi Y."/>
            <person name="Usuda Y."/>
            <person name="Kimura E."/>
            <person name="Sugimoto S."/>
            <person name="Matsui K."/>
            <person name="Yamagishi A."/>
            <person name="Kikuchi H."/>
            <person name="Ikeo K."/>
            <person name="Gojobori T."/>
        </authorList>
    </citation>
    <scope>NUCLEOTIDE SEQUENCE [LARGE SCALE GENOMIC DNA]</scope>
    <source>
        <strain>DSM 44549 / YS-314 / AJ 12310 / JCM 11189 / NBRC 100395</strain>
    </source>
</reference>